<protein>
    <recommendedName>
        <fullName evidence="1">Diphthine synthase</fullName>
        <ecNumber evidence="1">2.1.1.98</ecNumber>
    </recommendedName>
    <alternativeName>
        <fullName evidence="1">Diphthamide biosynthesis methyltransferase</fullName>
    </alternativeName>
</protein>
<comment type="function">
    <text evidence="1">S-adenosyl-L-methionine-dependent methyltransferase that catalyzes the trimethylation of the amino group of the modified target histidine residue in translation elongation factor 2 (EF-2), to form an intermediate called diphthine. The three successive methylation reactions represent the second step of diphthamide biosynthesis.</text>
</comment>
<comment type="catalytic activity">
    <reaction evidence="1">
        <text>2-[(3S)-amino-3-carboxypropyl]-L-histidyl-[translation elongation factor 2] + 3 S-adenosyl-L-methionine = diphthine-[translation elongation factor 2] + 3 S-adenosyl-L-homocysteine + 3 H(+)</text>
        <dbReference type="Rhea" id="RHEA:36415"/>
        <dbReference type="Rhea" id="RHEA-COMP:9749"/>
        <dbReference type="Rhea" id="RHEA-COMP:10172"/>
        <dbReference type="ChEBI" id="CHEBI:15378"/>
        <dbReference type="ChEBI" id="CHEBI:57856"/>
        <dbReference type="ChEBI" id="CHEBI:59789"/>
        <dbReference type="ChEBI" id="CHEBI:73995"/>
        <dbReference type="ChEBI" id="CHEBI:82696"/>
        <dbReference type="EC" id="2.1.1.98"/>
    </reaction>
</comment>
<comment type="pathway">
    <text evidence="1">Protein modification; peptidyl-diphthamide biosynthesis.</text>
</comment>
<comment type="subunit">
    <text evidence="1">Homodimer.</text>
</comment>
<comment type="similarity">
    <text evidence="1">Belongs to the diphthine synthase family.</text>
</comment>
<proteinExistence type="inferred from homology"/>
<organism>
    <name type="scientific">Methanococcus aeolicus (strain ATCC BAA-1280 / DSM 17508 / OCM 812 / Nankai-3)</name>
    <dbReference type="NCBI Taxonomy" id="419665"/>
    <lineage>
        <taxon>Archaea</taxon>
        <taxon>Methanobacteriati</taxon>
        <taxon>Methanobacteriota</taxon>
        <taxon>Methanomada group</taxon>
        <taxon>Methanococci</taxon>
        <taxon>Methanococcales</taxon>
        <taxon>Methanococcaceae</taxon>
        <taxon>Methanococcus</taxon>
    </lineage>
</organism>
<name>DPHB_META3</name>
<evidence type="ECO:0000255" key="1">
    <source>
        <dbReference type="HAMAP-Rule" id="MF_01084"/>
    </source>
</evidence>
<dbReference type="EC" id="2.1.1.98" evidence="1"/>
<dbReference type="EMBL" id="CP000743">
    <property type="protein sequence ID" value="ABR56021.1"/>
    <property type="molecule type" value="Genomic_DNA"/>
</dbReference>
<dbReference type="RefSeq" id="WP_011973153.1">
    <property type="nucleotide sequence ID" value="NC_009635.1"/>
</dbReference>
<dbReference type="SMR" id="A6UU49"/>
<dbReference type="STRING" id="419665.Maeo_0435"/>
<dbReference type="GeneID" id="5327287"/>
<dbReference type="KEGG" id="mae:Maeo_0435"/>
<dbReference type="eggNOG" id="arCOG04161">
    <property type="taxonomic scope" value="Archaea"/>
</dbReference>
<dbReference type="HOGENOM" id="CLU_066040_1_0_2"/>
<dbReference type="OrthoDB" id="39139at2157"/>
<dbReference type="UniPathway" id="UPA00559"/>
<dbReference type="Proteomes" id="UP000001106">
    <property type="component" value="Chromosome"/>
</dbReference>
<dbReference type="GO" id="GO:0004164">
    <property type="term" value="F:diphthine synthase activity"/>
    <property type="evidence" value="ECO:0007669"/>
    <property type="project" value="UniProtKB-UniRule"/>
</dbReference>
<dbReference type="GO" id="GO:0032259">
    <property type="term" value="P:methylation"/>
    <property type="evidence" value="ECO:0007669"/>
    <property type="project" value="UniProtKB-KW"/>
</dbReference>
<dbReference type="GO" id="GO:0017183">
    <property type="term" value="P:protein histidyl modification to diphthamide"/>
    <property type="evidence" value="ECO:0007669"/>
    <property type="project" value="UniProtKB-UniRule"/>
</dbReference>
<dbReference type="CDD" id="cd11647">
    <property type="entry name" value="DHP5_DphB"/>
    <property type="match status" value="1"/>
</dbReference>
<dbReference type="Gene3D" id="3.40.1010.10">
    <property type="entry name" value="Cobalt-precorrin-4 Transmethylase, Domain 1"/>
    <property type="match status" value="1"/>
</dbReference>
<dbReference type="Gene3D" id="3.30.950.10">
    <property type="entry name" value="Methyltransferase, Cobalt-precorrin-4 Transmethylase, Domain 2"/>
    <property type="match status" value="1"/>
</dbReference>
<dbReference type="HAMAP" id="MF_01084">
    <property type="entry name" value="Diphthine_synth"/>
    <property type="match status" value="1"/>
</dbReference>
<dbReference type="InterPro" id="IPR000878">
    <property type="entry name" value="4pyrrol_Mease"/>
</dbReference>
<dbReference type="InterPro" id="IPR035996">
    <property type="entry name" value="4pyrrol_Methylase_sf"/>
</dbReference>
<dbReference type="InterPro" id="IPR014777">
    <property type="entry name" value="4pyrrole_Mease_sub1"/>
</dbReference>
<dbReference type="InterPro" id="IPR014776">
    <property type="entry name" value="4pyrrole_Mease_sub2"/>
</dbReference>
<dbReference type="InterPro" id="IPR004551">
    <property type="entry name" value="Dphthn_synthase"/>
</dbReference>
<dbReference type="NCBIfam" id="TIGR00522">
    <property type="entry name" value="dph5"/>
    <property type="match status" value="1"/>
</dbReference>
<dbReference type="PANTHER" id="PTHR10882:SF0">
    <property type="entry name" value="DIPHTHINE METHYL ESTER SYNTHASE"/>
    <property type="match status" value="1"/>
</dbReference>
<dbReference type="PANTHER" id="PTHR10882">
    <property type="entry name" value="DIPHTHINE SYNTHASE"/>
    <property type="match status" value="1"/>
</dbReference>
<dbReference type="Pfam" id="PF00590">
    <property type="entry name" value="TP_methylase"/>
    <property type="match status" value="1"/>
</dbReference>
<dbReference type="PIRSF" id="PIRSF036432">
    <property type="entry name" value="Diphthine_synth"/>
    <property type="match status" value="1"/>
</dbReference>
<dbReference type="SUPFAM" id="SSF53790">
    <property type="entry name" value="Tetrapyrrole methylase"/>
    <property type="match status" value="1"/>
</dbReference>
<accession>A6UU49</accession>
<reference key="1">
    <citation type="submission" date="2007-06" db="EMBL/GenBank/DDBJ databases">
        <title>Complete sequence of Methanococcus aeolicus Nankai-3.</title>
        <authorList>
            <consortium name="US DOE Joint Genome Institute"/>
            <person name="Copeland A."/>
            <person name="Lucas S."/>
            <person name="Lapidus A."/>
            <person name="Barry K."/>
            <person name="Glavina del Rio T."/>
            <person name="Dalin E."/>
            <person name="Tice H."/>
            <person name="Pitluck S."/>
            <person name="Chain P."/>
            <person name="Malfatti S."/>
            <person name="Shin M."/>
            <person name="Vergez L."/>
            <person name="Schmutz J."/>
            <person name="Larimer F."/>
            <person name="Land M."/>
            <person name="Hauser L."/>
            <person name="Kyrpides N."/>
            <person name="Lykidis A."/>
            <person name="Sieprawska-Lupa M."/>
            <person name="Whitman W.B."/>
            <person name="Richardson P."/>
        </authorList>
    </citation>
    <scope>NUCLEOTIDE SEQUENCE [LARGE SCALE GENOMIC DNA]</scope>
    <source>
        <strain>ATCC BAA-1280 / DSM 17508 / OCM 812 / Nankai-3</strain>
    </source>
</reference>
<keyword id="KW-0489">Methyltransferase</keyword>
<keyword id="KW-0949">S-adenosyl-L-methionine</keyword>
<keyword id="KW-0808">Transferase</keyword>
<gene>
    <name evidence="1" type="primary">dphB</name>
    <name type="ordered locus">Maeo_0435</name>
</gene>
<sequence>MIILAGLGLYDEKDTTLKTVEFAKKADKIYAEFYTAILTGTTIEKIEETLGKEITILDREKVELETEKLINESKDKDIMFLTAGDPMVATTHIDIAIEAKKKGIEVIILNAPSIYSAIGITGLQLYKFGKTTSIVFPEPNYFPETPYDVIKENSKMGYHTLCLLDIQAHNTRFMTANEGLEVLLKIEEKRNENILNKDTKVVVVARAGSLKPKMVYGKIGDLLEYDFGAPLHCIIFTGNLHFMEEDALKYLCENISE</sequence>
<feature type="chain" id="PRO_1000064815" description="Diphthine synthase">
    <location>
        <begin position="1"/>
        <end position="257"/>
    </location>
</feature>
<feature type="binding site" evidence="1">
    <location>
        <position position="9"/>
    </location>
    <ligand>
        <name>S-adenosyl-L-methionine</name>
        <dbReference type="ChEBI" id="CHEBI:59789"/>
    </ligand>
</feature>
<feature type="binding site" evidence="1">
    <location>
        <position position="85"/>
    </location>
    <ligand>
        <name>S-adenosyl-L-methionine</name>
        <dbReference type="ChEBI" id="CHEBI:59789"/>
    </ligand>
</feature>
<feature type="binding site" evidence="1">
    <location>
        <position position="88"/>
    </location>
    <ligand>
        <name>S-adenosyl-L-methionine</name>
        <dbReference type="ChEBI" id="CHEBI:59789"/>
    </ligand>
</feature>
<feature type="binding site" evidence="1">
    <location>
        <begin position="113"/>
        <end position="114"/>
    </location>
    <ligand>
        <name>S-adenosyl-L-methionine</name>
        <dbReference type="ChEBI" id="CHEBI:59789"/>
    </ligand>
</feature>
<feature type="binding site" evidence="1">
    <location>
        <position position="164"/>
    </location>
    <ligand>
        <name>S-adenosyl-L-methionine</name>
        <dbReference type="ChEBI" id="CHEBI:59789"/>
    </ligand>
</feature>
<feature type="binding site" evidence="1">
    <location>
        <position position="207"/>
    </location>
    <ligand>
        <name>S-adenosyl-L-methionine</name>
        <dbReference type="ChEBI" id="CHEBI:59789"/>
    </ligand>
</feature>
<feature type="binding site" evidence="1">
    <location>
        <position position="232"/>
    </location>
    <ligand>
        <name>S-adenosyl-L-methionine</name>
        <dbReference type="ChEBI" id="CHEBI:59789"/>
    </ligand>
</feature>